<comment type="function">
    <text evidence="1">Catalyzes the oxidative decarboxylation of 6-phosphogluconate to ribulose 5-phosphate and CO(2), with concomitant reduction of NADP to NADPH.</text>
</comment>
<comment type="catalytic activity">
    <reaction>
        <text>6-phospho-D-gluconate + NADP(+) = D-ribulose 5-phosphate + CO2 + NADPH</text>
        <dbReference type="Rhea" id="RHEA:10116"/>
        <dbReference type="ChEBI" id="CHEBI:16526"/>
        <dbReference type="ChEBI" id="CHEBI:57783"/>
        <dbReference type="ChEBI" id="CHEBI:58121"/>
        <dbReference type="ChEBI" id="CHEBI:58349"/>
        <dbReference type="ChEBI" id="CHEBI:58759"/>
        <dbReference type="EC" id="1.1.1.44"/>
    </reaction>
</comment>
<comment type="pathway">
    <text>Carbohydrate degradation; pentose phosphate pathway; D-ribulose 5-phosphate from D-glucose 6-phosphate (oxidative stage): step 3/3.</text>
</comment>
<comment type="subunit">
    <text evidence="1">Homodimer.</text>
</comment>
<comment type="similarity">
    <text evidence="2">Belongs to the 6-phosphogluconate dehydrogenase family.</text>
</comment>
<protein>
    <recommendedName>
        <fullName>6-phosphogluconate dehydrogenase, decarboxylating</fullName>
        <ecNumber>1.1.1.44</ecNumber>
    </recommendedName>
</protein>
<organism>
    <name type="scientific">Shigella dysenteriae</name>
    <dbReference type="NCBI Taxonomy" id="622"/>
    <lineage>
        <taxon>Bacteria</taxon>
        <taxon>Pseudomonadati</taxon>
        <taxon>Pseudomonadota</taxon>
        <taxon>Gammaproteobacteria</taxon>
        <taxon>Enterobacterales</taxon>
        <taxon>Enterobacteriaceae</taxon>
        <taxon>Shigella</taxon>
    </lineage>
</organism>
<feature type="chain" id="PRO_0000090049" description="6-phosphogluconate dehydrogenase, decarboxylating">
    <location>
        <begin position="1" status="less than"/>
        <end position="445" status="greater than"/>
    </location>
</feature>
<feature type="active site" description="Proton acceptor" evidence="1">
    <location>
        <position position="172"/>
    </location>
</feature>
<feature type="active site" description="Proton donor" evidence="1">
    <location>
        <position position="179"/>
    </location>
</feature>
<feature type="binding site" evidence="1">
    <location>
        <begin position="1"/>
        <end position="4"/>
    </location>
    <ligand>
        <name>NADP(+)</name>
        <dbReference type="ChEBI" id="CHEBI:58349"/>
    </ligand>
</feature>
<feature type="binding site" evidence="1">
    <location>
        <begin position="22"/>
        <end position="24"/>
    </location>
    <ligand>
        <name>NADP(+)</name>
        <dbReference type="ChEBI" id="CHEBI:58349"/>
    </ligand>
</feature>
<feature type="binding site" evidence="1">
    <location>
        <begin position="63"/>
        <end position="65"/>
    </location>
    <ligand>
        <name>NADP(+)</name>
        <dbReference type="ChEBI" id="CHEBI:58349"/>
    </ligand>
</feature>
<feature type="binding site" evidence="1">
    <location>
        <position position="91"/>
    </location>
    <ligand>
        <name>NADP(+)</name>
        <dbReference type="ChEBI" id="CHEBI:58349"/>
    </ligand>
</feature>
<feature type="binding site" description="in other chain" evidence="1">
    <location>
        <position position="91"/>
    </location>
    <ligand>
        <name>substrate</name>
        <note>ligand shared between dimeric partners</note>
    </ligand>
</feature>
<feature type="binding site" description="in other chain" evidence="1">
    <location>
        <begin position="117"/>
        <end position="119"/>
    </location>
    <ligand>
        <name>substrate</name>
        <note>ligand shared between dimeric partners</note>
    </ligand>
</feature>
<feature type="binding site" description="in other chain" evidence="1">
    <location>
        <begin position="175"/>
        <end position="176"/>
    </location>
    <ligand>
        <name>substrate</name>
        <note>ligand shared between dimeric partners</note>
    </ligand>
</feature>
<feature type="binding site" description="in other chain" evidence="1">
    <location>
        <position position="180"/>
    </location>
    <ligand>
        <name>substrate</name>
        <note>ligand shared between dimeric partners</note>
    </ligand>
</feature>
<feature type="binding site" description="in other chain" evidence="1">
    <location>
        <position position="249"/>
    </location>
    <ligand>
        <name>substrate</name>
        <note>ligand shared between dimeric partners</note>
    </ligand>
</feature>
<feature type="binding site" description="in other chain" evidence="1">
    <location>
        <position position="276"/>
    </location>
    <ligand>
        <name>substrate</name>
        <note>ligand shared between dimeric partners</note>
    </ligand>
</feature>
<feature type="binding site" evidence="1">
    <location>
        <position position="434"/>
    </location>
    <ligand>
        <name>substrate</name>
        <note>ligand shared between dimeric partners</note>
    </ligand>
</feature>
<feature type="binding site" evidence="1">
    <location>
        <position position="440"/>
    </location>
    <ligand>
        <name>substrate</name>
        <note>ligand shared between dimeric partners</note>
    </ligand>
</feature>
<feature type="non-terminal residue">
    <location>
        <position position="1"/>
    </location>
</feature>
<feature type="non-terminal residue">
    <location>
        <position position="445"/>
    </location>
</feature>
<accession>P41579</accession>
<gene>
    <name type="primary">gnd</name>
</gene>
<reference key="1">
    <citation type="journal article" date="1994" name="Proc. Natl. Acad. Sci. U.S.A.">
        <title>Intergeneric transfer and recombination of the 6-phosphogluconate dehydrogenase gene (gnd) in enteric bacteria.</title>
        <authorList>
            <person name="Nelson K."/>
            <person name="Selander R.K."/>
        </authorList>
    </citation>
    <scope>NUCLEOTIDE SEQUENCE [GENOMIC DNA]</scope>
    <source>
        <strain>ATCC 13313 / NCTC 4837</strain>
    </source>
</reference>
<keyword id="KW-0311">Gluconate utilization</keyword>
<keyword id="KW-0521">NADP</keyword>
<keyword id="KW-0560">Oxidoreductase</keyword>
<keyword id="KW-0570">Pentose shunt</keyword>
<proteinExistence type="inferred from homology"/>
<sequence>AVMGRNLALNIESRGYTVSIFNRSREKTEEVIAENPGKKLVPYYTVKEFVESLETPRRILLMVKAGAGTDAAIDSLKPYLDKGDIIIDGGNTFFQDTIRRNRELSAEGFNFIGTGVSGGEEGALKGPSIMPGGQKEAYELVAPILTKIAAVAEDGEPCVTYIGADGAGHYVKMVHNGIEYGDMQLIAEAYSLLKGGLNLSNEELAQTFTEWNNGELSSYLIDITKDIFTKKDEDGNYLVDVILDEAANKGTGKWTSQSALDLGEPLSLITESVFARYISSLKDQRVAASKVLSGPQAQPAGDKAEFIEKVRRALYLGKIVSYAQGFSQLRAASEEYNWDLNYGEIAKIFRAGCIIRAQFLQKITDAYAENPQIANLLLAPYFKQIADDYQQALRDVVAYAVQNGIPVPTFAAAVAYYDSYRAAFLPANLIQAQRDYFGAHTYKRI</sequence>
<name>6PGD_SHIDY</name>
<evidence type="ECO:0000250" key="1"/>
<evidence type="ECO:0000305" key="2"/>
<dbReference type="EC" id="1.1.1.44"/>
<dbReference type="EMBL" id="U14467">
    <property type="protein sequence ID" value="AAC43821.1"/>
    <property type="molecule type" value="Genomic_DNA"/>
</dbReference>
<dbReference type="SMR" id="P41579"/>
<dbReference type="UniPathway" id="UPA00115">
    <property type="reaction ID" value="UER00410"/>
</dbReference>
<dbReference type="GO" id="GO:0050661">
    <property type="term" value="F:NADP binding"/>
    <property type="evidence" value="ECO:0007669"/>
    <property type="project" value="InterPro"/>
</dbReference>
<dbReference type="GO" id="GO:0004616">
    <property type="term" value="F:phosphogluconate dehydrogenase (decarboxylating) activity"/>
    <property type="evidence" value="ECO:0000250"/>
    <property type="project" value="UniProtKB"/>
</dbReference>
<dbReference type="GO" id="GO:0019521">
    <property type="term" value="P:D-gluconate metabolic process"/>
    <property type="evidence" value="ECO:0007669"/>
    <property type="project" value="UniProtKB-KW"/>
</dbReference>
<dbReference type="GO" id="GO:0016054">
    <property type="term" value="P:organic acid catabolic process"/>
    <property type="evidence" value="ECO:0007669"/>
    <property type="project" value="UniProtKB-ARBA"/>
</dbReference>
<dbReference type="GO" id="GO:0006098">
    <property type="term" value="P:pentose-phosphate shunt"/>
    <property type="evidence" value="ECO:0000250"/>
    <property type="project" value="UniProtKB"/>
</dbReference>
<dbReference type="FunFam" id="1.10.1040.10:FF:000002">
    <property type="entry name" value="6-phosphogluconate dehydrogenase, decarboxylating"/>
    <property type="match status" value="1"/>
</dbReference>
<dbReference type="FunFam" id="3.40.50.720:FF:000007">
    <property type="entry name" value="6-phosphogluconate dehydrogenase, decarboxylating"/>
    <property type="match status" value="1"/>
</dbReference>
<dbReference type="Gene3D" id="1.20.5.320">
    <property type="entry name" value="6-Phosphogluconate Dehydrogenase, domain 3"/>
    <property type="match status" value="1"/>
</dbReference>
<dbReference type="Gene3D" id="1.10.1040.10">
    <property type="entry name" value="N-(1-d-carboxylethyl)-l-norvaline Dehydrogenase, domain 2"/>
    <property type="match status" value="1"/>
</dbReference>
<dbReference type="Gene3D" id="3.40.50.720">
    <property type="entry name" value="NAD(P)-binding Rossmann-like Domain"/>
    <property type="match status" value="1"/>
</dbReference>
<dbReference type="InterPro" id="IPR008927">
    <property type="entry name" value="6-PGluconate_DH-like_C_sf"/>
</dbReference>
<dbReference type="InterPro" id="IPR013328">
    <property type="entry name" value="6PGD_dom2"/>
</dbReference>
<dbReference type="InterPro" id="IPR006114">
    <property type="entry name" value="6PGDH_C"/>
</dbReference>
<dbReference type="InterPro" id="IPR006113">
    <property type="entry name" value="6PGDH_Gnd/GntZ"/>
</dbReference>
<dbReference type="InterPro" id="IPR006115">
    <property type="entry name" value="6PGDH_NADP-bd"/>
</dbReference>
<dbReference type="InterPro" id="IPR006184">
    <property type="entry name" value="6PGdom_BS"/>
</dbReference>
<dbReference type="InterPro" id="IPR036291">
    <property type="entry name" value="NAD(P)-bd_dom_sf"/>
</dbReference>
<dbReference type="InterPro" id="IPR006183">
    <property type="entry name" value="Pgluconate_DH"/>
</dbReference>
<dbReference type="NCBIfam" id="TIGR00873">
    <property type="entry name" value="gnd"/>
    <property type="match status" value="1"/>
</dbReference>
<dbReference type="NCBIfam" id="NF006765">
    <property type="entry name" value="PRK09287.1"/>
    <property type="match status" value="1"/>
</dbReference>
<dbReference type="PANTHER" id="PTHR11811">
    <property type="entry name" value="6-PHOSPHOGLUCONATE DEHYDROGENASE"/>
    <property type="match status" value="1"/>
</dbReference>
<dbReference type="Pfam" id="PF00393">
    <property type="entry name" value="6PGD"/>
    <property type="match status" value="1"/>
</dbReference>
<dbReference type="Pfam" id="PF03446">
    <property type="entry name" value="NAD_binding_2"/>
    <property type="match status" value="1"/>
</dbReference>
<dbReference type="PIRSF" id="PIRSF000109">
    <property type="entry name" value="6PGD"/>
    <property type="match status" value="1"/>
</dbReference>
<dbReference type="PRINTS" id="PR00076">
    <property type="entry name" value="6PGDHDRGNASE"/>
</dbReference>
<dbReference type="SMART" id="SM01350">
    <property type="entry name" value="6PGD"/>
    <property type="match status" value="1"/>
</dbReference>
<dbReference type="SUPFAM" id="SSF48179">
    <property type="entry name" value="6-phosphogluconate dehydrogenase C-terminal domain-like"/>
    <property type="match status" value="1"/>
</dbReference>
<dbReference type="SUPFAM" id="SSF51735">
    <property type="entry name" value="NAD(P)-binding Rossmann-fold domains"/>
    <property type="match status" value="1"/>
</dbReference>
<dbReference type="PROSITE" id="PS00461">
    <property type="entry name" value="6PGD"/>
    <property type="match status" value="1"/>
</dbReference>